<name>FABD_ECO57</name>
<gene>
    <name type="primary">fabD</name>
    <name type="ordered locus">Z1731</name>
    <name type="ordered locus">ECs1470</name>
</gene>
<accession>Q8X8I7</accession>
<accession>Q7AF87</accession>
<dbReference type="EC" id="2.3.1.39"/>
<dbReference type="EMBL" id="AE005174">
    <property type="protein sequence ID" value="AAG55838.1"/>
    <property type="molecule type" value="Genomic_DNA"/>
</dbReference>
<dbReference type="EMBL" id="BA000007">
    <property type="protein sequence ID" value="BAB34893.1"/>
    <property type="molecule type" value="Genomic_DNA"/>
</dbReference>
<dbReference type="PIR" id="B85672">
    <property type="entry name" value="B85672"/>
</dbReference>
<dbReference type="PIR" id="F90812">
    <property type="entry name" value="F90812"/>
</dbReference>
<dbReference type="RefSeq" id="NP_309497.1">
    <property type="nucleotide sequence ID" value="NC_002695.1"/>
</dbReference>
<dbReference type="RefSeq" id="WP_000191362.1">
    <property type="nucleotide sequence ID" value="NZ_VOAI01000018.1"/>
</dbReference>
<dbReference type="SMR" id="Q8X8I7"/>
<dbReference type="STRING" id="155864.Z1731"/>
<dbReference type="GeneID" id="913863"/>
<dbReference type="KEGG" id="ece:Z1731"/>
<dbReference type="KEGG" id="ecs:ECs_1470"/>
<dbReference type="PATRIC" id="fig|386585.9.peg.1570"/>
<dbReference type="eggNOG" id="COG0331">
    <property type="taxonomic scope" value="Bacteria"/>
</dbReference>
<dbReference type="HOGENOM" id="CLU_030558_0_0_6"/>
<dbReference type="OMA" id="AANYNCP"/>
<dbReference type="UniPathway" id="UPA00094"/>
<dbReference type="Proteomes" id="UP000000558">
    <property type="component" value="Chromosome"/>
</dbReference>
<dbReference type="Proteomes" id="UP000002519">
    <property type="component" value="Chromosome"/>
</dbReference>
<dbReference type="GO" id="GO:0005829">
    <property type="term" value="C:cytosol"/>
    <property type="evidence" value="ECO:0007669"/>
    <property type="project" value="TreeGrafter"/>
</dbReference>
<dbReference type="GO" id="GO:0004314">
    <property type="term" value="F:[acyl-carrier-protein] S-malonyltransferase activity"/>
    <property type="evidence" value="ECO:0007669"/>
    <property type="project" value="UniProtKB-EC"/>
</dbReference>
<dbReference type="GO" id="GO:0006633">
    <property type="term" value="P:fatty acid biosynthetic process"/>
    <property type="evidence" value="ECO:0007669"/>
    <property type="project" value="UniProtKB-UniPathway"/>
</dbReference>
<dbReference type="FunFam" id="3.30.70.250:FF:000001">
    <property type="entry name" value="Malonyl CoA-acyl carrier protein transacylase"/>
    <property type="match status" value="1"/>
</dbReference>
<dbReference type="Gene3D" id="3.30.70.250">
    <property type="entry name" value="Malonyl-CoA ACP transacylase, ACP-binding"/>
    <property type="match status" value="1"/>
</dbReference>
<dbReference type="Gene3D" id="3.40.366.10">
    <property type="entry name" value="Malonyl-Coenzyme A Acyl Carrier Protein, domain 2"/>
    <property type="match status" value="1"/>
</dbReference>
<dbReference type="InterPro" id="IPR001227">
    <property type="entry name" value="Ac_transferase_dom_sf"/>
</dbReference>
<dbReference type="InterPro" id="IPR014043">
    <property type="entry name" value="Acyl_transferase_dom"/>
</dbReference>
<dbReference type="InterPro" id="IPR016035">
    <property type="entry name" value="Acyl_Trfase/lysoPLipase"/>
</dbReference>
<dbReference type="InterPro" id="IPR050858">
    <property type="entry name" value="Mal-CoA-ACP_Trans/PKS_FabD"/>
</dbReference>
<dbReference type="InterPro" id="IPR024925">
    <property type="entry name" value="Malonyl_CoA-ACP_transAc"/>
</dbReference>
<dbReference type="InterPro" id="IPR004410">
    <property type="entry name" value="Malonyl_CoA-ACP_transAc_FabD"/>
</dbReference>
<dbReference type="InterPro" id="IPR016036">
    <property type="entry name" value="Malonyl_transacylase_ACP-bd"/>
</dbReference>
<dbReference type="NCBIfam" id="TIGR00128">
    <property type="entry name" value="fabD"/>
    <property type="match status" value="1"/>
</dbReference>
<dbReference type="PANTHER" id="PTHR42681">
    <property type="entry name" value="MALONYL-COA-ACYL CARRIER PROTEIN TRANSACYLASE, MITOCHONDRIAL"/>
    <property type="match status" value="1"/>
</dbReference>
<dbReference type="PANTHER" id="PTHR42681:SF1">
    <property type="entry name" value="MALONYL-COA-ACYL CARRIER PROTEIN TRANSACYLASE, MITOCHONDRIAL"/>
    <property type="match status" value="1"/>
</dbReference>
<dbReference type="Pfam" id="PF00698">
    <property type="entry name" value="Acyl_transf_1"/>
    <property type="match status" value="1"/>
</dbReference>
<dbReference type="PIRSF" id="PIRSF000446">
    <property type="entry name" value="Mct"/>
    <property type="match status" value="1"/>
</dbReference>
<dbReference type="SMART" id="SM00827">
    <property type="entry name" value="PKS_AT"/>
    <property type="match status" value="1"/>
</dbReference>
<dbReference type="SUPFAM" id="SSF52151">
    <property type="entry name" value="FabD/lysophospholipase-like"/>
    <property type="match status" value="1"/>
</dbReference>
<dbReference type="SUPFAM" id="SSF55048">
    <property type="entry name" value="Probable ACP-binding domain of malonyl-CoA ACP transacylase"/>
    <property type="match status" value="1"/>
</dbReference>
<keyword id="KW-0012">Acyltransferase</keyword>
<keyword id="KW-0275">Fatty acid biosynthesis</keyword>
<keyword id="KW-0276">Fatty acid metabolism</keyword>
<keyword id="KW-0444">Lipid biosynthesis</keyword>
<keyword id="KW-0443">Lipid metabolism</keyword>
<keyword id="KW-1185">Reference proteome</keyword>
<keyword id="KW-0808">Transferase</keyword>
<evidence type="ECO:0000250" key="1"/>
<evidence type="ECO:0000305" key="2"/>
<proteinExistence type="inferred from homology"/>
<protein>
    <recommendedName>
        <fullName>Malonyl CoA-acyl carrier protein transacylase</fullName>
        <shortName>MCT</shortName>
        <ecNumber>2.3.1.39</ecNumber>
    </recommendedName>
</protein>
<sequence>MTQFAFVFPGQGSQTVGMLADMAASYPIVEETFAEASAALGYDLWALTQQGPAEELNKTWQTQPALLTASVALYRVWQQHGGKAPAMMAGHSLGEYSALVCAGVIDFADAVRLVEMRGKFMQEAVPEGTGAMAAIIGLDDASIGKACEEAAEGQVVSPVNFNSPGQVVIAGHKEAVERAGAACKAAGAKRALPLPVSVPSHCALMKPAADKLAVELAKITFNAPTVPVVNNVDVKCETNGDAIRDALVRQLYNPVQWTKSVEYMAAQGVEHLYEVGPGKVLTGLTKRIVDTLTASALNEPSAMAAALEL</sequence>
<comment type="catalytic activity">
    <reaction>
        <text>holo-[ACP] + malonyl-CoA = malonyl-[ACP] + CoA</text>
        <dbReference type="Rhea" id="RHEA:41792"/>
        <dbReference type="Rhea" id="RHEA-COMP:9623"/>
        <dbReference type="Rhea" id="RHEA-COMP:9685"/>
        <dbReference type="ChEBI" id="CHEBI:57287"/>
        <dbReference type="ChEBI" id="CHEBI:57384"/>
        <dbReference type="ChEBI" id="CHEBI:64479"/>
        <dbReference type="ChEBI" id="CHEBI:78449"/>
        <dbReference type="EC" id="2.3.1.39"/>
    </reaction>
</comment>
<comment type="pathway">
    <text>Lipid metabolism; fatty acid biosynthesis.</text>
</comment>
<comment type="similarity">
    <text evidence="2">Belongs to the FabD family.</text>
</comment>
<organism>
    <name type="scientific">Escherichia coli O157:H7</name>
    <dbReference type="NCBI Taxonomy" id="83334"/>
    <lineage>
        <taxon>Bacteria</taxon>
        <taxon>Pseudomonadati</taxon>
        <taxon>Pseudomonadota</taxon>
        <taxon>Gammaproteobacteria</taxon>
        <taxon>Enterobacterales</taxon>
        <taxon>Enterobacteriaceae</taxon>
        <taxon>Escherichia</taxon>
    </lineage>
</organism>
<reference key="1">
    <citation type="journal article" date="2001" name="Nature">
        <title>Genome sequence of enterohaemorrhagic Escherichia coli O157:H7.</title>
        <authorList>
            <person name="Perna N.T."/>
            <person name="Plunkett G. III"/>
            <person name="Burland V."/>
            <person name="Mau B."/>
            <person name="Glasner J.D."/>
            <person name="Rose D.J."/>
            <person name="Mayhew G.F."/>
            <person name="Evans P.S."/>
            <person name="Gregor J."/>
            <person name="Kirkpatrick H.A."/>
            <person name="Posfai G."/>
            <person name="Hackett J."/>
            <person name="Klink S."/>
            <person name="Boutin A."/>
            <person name="Shao Y."/>
            <person name="Miller L."/>
            <person name="Grotbeck E.J."/>
            <person name="Davis N.W."/>
            <person name="Lim A."/>
            <person name="Dimalanta E.T."/>
            <person name="Potamousis K."/>
            <person name="Apodaca J."/>
            <person name="Anantharaman T.S."/>
            <person name="Lin J."/>
            <person name="Yen G."/>
            <person name="Schwartz D.C."/>
            <person name="Welch R.A."/>
            <person name="Blattner F.R."/>
        </authorList>
    </citation>
    <scope>NUCLEOTIDE SEQUENCE [LARGE SCALE GENOMIC DNA]</scope>
    <source>
        <strain>O157:H7 / EDL933 / ATCC 700927 / EHEC</strain>
    </source>
</reference>
<reference key="2">
    <citation type="journal article" date="2001" name="DNA Res.">
        <title>Complete genome sequence of enterohemorrhagic Escherichia coli O157:H7 and genomic comparison with a laboratory strain K-12.</title>
        <authorList>
            <person name="Hayashi T."/>
            <person name="Makino K."/>
            <person name="Ohnishi M."/>
            <person name="Kurokawa K."/>
            <person name="Ishii K."/>
            <person name="Yokoyama K."/>
            <person name="Han C.-G."/>
            <person name="Ohtsubo E."/>
            <person name="Nakayama K."/>
            <person name="Murata T."/>
            <person name="Tanaka M."/>
            <person name="Tobe T."/>
            <person name="Iida T."/>
            <person name="Takami H."/>
            <person name="Honda T."/>
            <person name="Sasakawa C."/>
            <person name="Ogasawara N."/>
            <person name="Yasunaga T."/>
            <person name="Kuhara S."/>
            <person name="Shiba T."/>
            <person name="Hattori M."/>
            <person name="Shinagawa H."/>
        </authorList>
    </citation>
    <scope>NUCLEOTIDE SEQUENCE [LARGE SCALE GENOMIC DNA]</scope>
    <source>
        <strain>O157:H7 / Sakai / RIMD 0509952 / EHEC</strain>
    </source>
</reference>
<feature type="initiator methionine" description="Removed" evidence="1">
    <location>
        <position position="1"/>
    </location>
</feature>
<feature type="chain" id="PRO_0000194214" description="Malonyl CoA-acyl carrier protein transacylase">
    <location>
        <begin position="2"/>
        <end position="309"/>
    </location>
</feature>
<feature type="active site" evidence="1">
    <location>
        <position position="92"/>
    </location>
</feature>
<feature type="active site" evidence="1">
    <location>
        <position position="201"/>
    </location>
</feature>